<accession>A8MKJ7</accession>
<reference key="1">
    <citation type="submission" date="2007-10" db="EMBL/GenBank/DDBJ databases">
        <title>Complete genome of Alkaliphilus oremlandii OhILAs.</title>
        <authorList>
            <person name="Copeland A."/>
            <person name="Lucas S."/>
            <person name="Lapidus A."/>
            <person name="Barry K."/>
            <person name="Detter J.C."/>
            <person name="Glavina del Rio T."/>
            <person name="Hammon N."/>
            <person name="Israni S."/>
            <person name="Dalin E."/>
            <person name="Tice H."/>
            <person name="Pitluck S."/>
            <person name="Chain P."/>
            <person name="Malfatti S."/>
            <person name="Shin M."/>
            <person name="Vergez L."/>
            <person name="Schmutz J."/>
            <person name="Larimer F."/>
            <person name="Land M."/>
            <person name="Hauser L."/>
            <person name="Kyrpides N."/>
            <person name="Mikhailova N."/>
            <person name="Stolz J.F."/>
            <person name="Dawson A."/>
            <person name="Fisher E."/>
            <person name="Crable B."/>
            <person name="Perera E."/>
            <person name="Lisak J."/>
            <person name="Ranganathan M."/>
            <person name="Basu P."/>
            <person name="Richardson P."/>
        </authorList>
    </citation>
    <scope>NUCLEOTIDE SEQUENCE [LARGE SCALE GENOMIC DNA]</scope>
    <source>
        <strain>OhILAs</strain>
    </source>
</reference>
<dbReference type="EMBL" id="CP000853">
    <property type="protein sequence ID" value="ABW20329.1"/>
    <property type="molecule type" value="Genomic_DNA"/>
</dbReference>
<dbReference type="RefSeq" id="WP_012160636.1">
    <property type="nucleotide sequence ID" value="NC_009922.1"/>
</dbReference>
<dbReference type="SMR" id="A8MKJ7"/>
<dbReference type="STRING" id="350688.Clos_2798"/>
<dbReference type="KEGG" id="aoe:Clos_2798"/>
<dbReference type="eggNOG" id="COG0359">
    <property type="taxonomic scope" value="Bacteria"/>
</dbReference>
<dbReference type="HOGENOM" id="CLU_078938_3_0_9"/>
<dbReference type="OrthoDB" id="9788336at2"/>
<dbReference type="Proteomes" id="UP000000269">
    <property type="component" value="Chromosome"/>
</dbReference>
<dbReference type="GO" id="GO:1990904">
    <property type="term" value="C:ribonucleoprotein complex"/>
    <property type="evidence" value="ECO:0007669"/>
    <property type="project" value="UniProtKB-KW"/>
</dbReference>
<dbReference type="GO" id="GO:0005840">
    <property type="term" value="C:ribosome"/>
    <property type="evidence" value="ECO:0007669"/>
    <property type="project" value="UniProtKB-KW"/>
</dbReference>
<dbReference type="GO" id="GO:0019843">
    <property type="term" value="F:rRNA binding"/>
    <property type="evidence" value="ECO:0007669"/>
    <property type="project" value="UniProtKB-UniRule"/>
</dbReference>
<dbReference type="GO" id="GO:0003735">
    <property type="term" value="F:structural constituent of ribosome"/>
    <property type="evidence" value="ECO:0007669"/>
    <property type="project" value="InterPro"/>
</dbReference>
<dbReference type="GO" id="GO:0006412">
    <property type="term" value="P:translation"/>
    <property type="evidence" value="ECO:0007669"/>
    <property type="project" value="UniProtKB-UniRule"/>
</dbReference>
<dbReference type="FunFam" id="3.40.5.10:FF:000002">
    <property type="entry name" value="50S ribosomal protein L9"/>
    <property type="match status" value="1"/>
</dbReference>
<dbReference type="Gene3D" id="3.10.430.100">
    <property type="entry name" value="Ribosomal protein L9, C-terminal domain"/>
    <property type="match status" value="1"/>
</dbReference>
<dbReference type="Gene3D" id="3.40.5.10">
    <property type="entry name" value="Ribosomal protein L9, N-terminal domain"/>
    <property type="match status" value="1"/>
</dbReference>
<dbReference type="HAMAP" id="MF_00503">
    <property type="entry name" value="Ribosomal_bL9"/>
    <property type="match status" value="1"/>
</dbReference>
<dbReference type="InterPro" id="IPR000244">
    <property type="entry name" value="Ribosomal_bL9"/>
</dbReference>
<dbReference type="InterPro" id="IPR009027">
    <property type="entry name" value="Ribosomal_bL9/RNase_H1_N"/>
</dbReference>
<dbReference type="InterPro" id="IPR020594">
    <property type="entry name" value="Ribosomal_bL9_bac/chp"/>
</dbReference>
<dbReference type="InterPro" id="IPR020069">
    <property type="entry name" value="Ribosomal_bL9_C"/>
</dbReference>
<dbReference type="InterPro" id="IPR036791">
    <property type="entry name" value="Ribosomal_bL9_C_sf"/>
</dbReference>
<dbReference type="InterPro" id="IPR020070">
    <property type="entry name" value="Ribosomal_bL9_N"/>
</dbReference>
<dbReference type="InterPro" id="IPR036935">
    <property type="entry name" value="Ribosomal_bL9_N_sf"/>
</dbReference>
<dbReference type="NCBIfam" id="TIGR00158">
    <property type="entry name" value="L9"/>
    <property type="match status" value="1"/>
</dbReference>
<dbReference type="PANTHER" id="PTHR21368">
    <property type="entry name" value="50S RIBOSOMAL PROTEIN L9"/>
    <property type="match status" value="1"/>
</dbReference>
<dbReference type="Pfam" id="PF03948">
    <property type="entry name" value="Ribosomal_L9_C"/>
    <property type="match status" value="1"/>
</dbReference>
<dbReference type="Pfam" id="PF01281">
    <property type="entry name" value="Ribosomal_L9_N"/>
    <property type="match status" value="1"/>
</dbReference>
<dbReference type="SUPFAM" id="SSF55658">
    <property type="entry name" value="L9 N-domain-like"/>
    <property type="match status" value="1"/>
</dbReference>
<dbReference type="SUPFAM" id="SSF55653">
    <property type="entry name" value="Ribosomal protein L9 C-domain"/>
    <property type="match status" value="1"/>
</dbReference>
<dbReference type="PROSITE" id="PS00651">
    <property type="entry name" value="RIBOSOMAL_L9"/>
    <property type="match status" value="1"/>
</dbReference>
<gene>
    <name evidence="1" type="primary">rplI</name>
    <name type="ordered locus">Clos_2798</name>
</gene>
<feature type="chain" id="PRO_1000060503" description="Large ribosomal subunit protein bL9">
    <location>
        <begin position="1"/>
        <end position="148"/>
    </location>
</feature>
<sequence>MKVILLQDVKGLGKKGEVVNASDGYARNFLFPKKLAAEATQGNVKTLNEQKTSQELKKQQEVEEAKELAKKIENSPIEIIAKAGDGGRLFGSVTSKDLAETLEKQHHIKIDKRKITLPEPIRELGVRHVEIKLHVGVVGKLTVNIKEA</sequence>
<organism>
    <name type="scientific">Alkaliphilus oremlandii (strain OhILAs)</name>
    <name type="common">Clostridium oremlandii (strain OhILAs)</name>
    <dbReference type="NCBI Taxonomy" id="350688"/>
    <lineage>
        <taxon>Bacteria</taxon>
        <taxon>Bacillati</taxon>
        <taxon>Bacillota</taxon>
        <taxon>Clostridia</taxon>
        <taxon>Peptostreptococcales</taxon>
        <taxon>Natronincolaceae</taxon>
        <taxon>Alkaliphilus</taxon>
    </lineage>
</organism>
<name>RL9_ALKOO</name>
<proteinExistence type="inferred from homology"/>
<keyword id="KW-1185">Reference proteome</keyword>
<keyword id="KW-0687">Ribonucleoprotein</keyword>
<keyword id="KW-0689">Ribosomal protein</keyword>
<keyword id="KW-0694">RNA-binding</keyword>
<keyword id="KW-0699">rRNA-binding</keyword>
<evidence type="ECO:0000255" key="1">
    <source>
        <dbReference type="HAMAP-Rule" id="MF_00503"/>
    </source>
</evidence>
<evidence type="ECO:0000305" key="2"/>
<protein>
    <recommendedName>
        <fullName evidence="1">Large ribosomal subunit protein bL9</fullName>
    </recommendedName>
    <alternativeName>
        <fullName evidence="2">50S ribosomal protein L9</fullName>
    </alternativeName>
</protein>
<comment type="function">
    <text evidence="1">Binds to the 23S rRNA.</text>
</comment>
<comment type="similarity">
    <text evidence="1">Belongs to the bacterial ribosomal protein bL9 family.</text>
</comment>